<organism>
    <name type="scientific">Arabidopsis thaliana</name>
    <name type="common">Mouse-ear cress</name>
    <dbReference type="NCBI Taxonomy" id="3702"/>
    <lineage>
        <taxon>Eukaryota</taxon>
        <taxon>Viridiplantae</taxon>
        <taxon>Streptophyta</taxon>
        <taxon>Embryophyta</taxon>
        <taxon>Tracheophyta</taxon>
        <taxon>Spermatophyta</taxon>
        <taxon>Magnoliopsida</taxon>
        <taxon>eudicotyledons</taxon>
        <taxon>Gunneridae</taxon>
        <taxon>Pentapetalae</taxon>
        <taxon>rosids</taxon>
        <taxon>malvids</taxon>
        <taxon>Brassicales</taxon>
        <taxon>Brassicaceae</taxon>
        <taxon>Camelineae</taxon>
        <taxon>Arabidopsis</taxon>
    </lineage>
</organism>
<protein>
    <recommendedName>
        <fullName>Serpin-Z4</fullName>
    </recommendedName>
    <alternativeName>
        <fullName>ArathZ4</fullName>
    </alternativeName>
</protein>
<comment type="function">
    <text evidence="1">Probable serine protease inhibitor.</text>
</comment>
<comment type="domain">
    <text evidence="1">The reactive center loop (RCL) extends out from the body of the protein and directs binding to the target protease. The protease cleaves the serpin at the reactive site within the RCL, establishing a covalent linkage between the carboxyl group of the serpin reactive site and the serine hydroxyl of the protease. The resulting inactive serpin-protease complex is highly stable (By similarity).</text>
</comment>
<comment type="similarity">
    <text evidence="3">Belongs to the serpin family.</text>
</comment>
<feature type="chain" id="PRO_0000334549" description="Serpin-Z4">
    <location>
        <begin position="1"/>
        <end position="393"/>
    </location>
</feature>
<feature type="region of interest" description="RCL">
    <location>
        <begin position="342"/>
        <end position="366"/>
    </location>
</feature>
<feature type="site" description="Reactive bond" evidence="2">
    <location>
        <begin position="356"/>
        <end position="357"/>
    </location>
</feature>
<reference key="1">
    <citation type="journal article" date="2000" name="Nature">
        <title>Sequence and analysis of chromosome 3 of the plant Arabidopsis thaliana.</title>
        <authorList>
            <person name="Salanoubat M."/>
            <person name="Lemcke K."/>
            <person name="Rieger M."/>
            <person name="Ansorge W."/>
            <person name="Unseld M."/>
            <person name="Fartmann B."/>
            <person name="Valle G."/>
            <person name="Bloecker H."/>
            <person name="Perez-Alonso M."/>
            <person name="Obermaier B."/>
            <person name="Delseny M."/>
            <person name="Boutry M."/>
            <person name="Grivell L.A."/>
            <person name="Mache R."/>
            <person name="Puigdomenech P."/>
            <person name="De Simone V."/>
            <person name="Choisne N."/>
            <person name="Artiguenave F."/>
            <person name="Robert C."/>
            <person name="Brottier P."/>
            <person name="Wincker P."/>
            <person name="Cattolico L."/>
            <person name="Weissenbach J."/>
            <person name="Saurin W."/>
            <person name="Quetier F."/>
            <person name="Schaefer M."/>
            <person name="Mueller-Auer S."/>
            <person name="Gabel C."/>
            <person name="Fuchs M."/>
            <person name="Benes V."/>
            <person name="Wurmbach E."/>
            <person name="Drzonek H."/>
            <person name="Erfle H."/>
            <person name="Jordan N."/>
            <person name="Bangert S."/>
            <person name="Wiedelmann R."/>
            <person name="Kranz H."/>
            <person name="Voss H."/>
            <person name="Holland R."/>
            <person name="Brandt P."/>
            <person name="Nyakatura G."/>
            <person name="Vezzi A."/>
            <person name="D'Angelo M."/>
            <person name="Pallavicini A."/>
            <person name="Toppo S."/>
            <person name="Simionati B."/>
            <person name="Conrad A."/>
            <person name="Hornischer K."/>
            <person name="Kauer G."/>
            <person name="Loehnert T.-H."/>
            <person name="Nordsiek G."/>
            <person name="Reichelt J."/>
            <person name="Scharfe M."/>
            <person name="Schoen O."/>
            <person name="Bargues M."/>
            <person name="Terol J."/>
            <person name="Climent J."/>
            <person name="Navarro P."/>
            <person name="Collado C."/>
            <person name="Perez-Perez A."/>
            <person name="Ottenwaelder B."/>
            <person name="Duchemin D."/>
            <person name="Cooke R."/>
            <person name="Laudie M."/>
            <person name="Berger-Llauro C."/>
            <person name="Purnelle B."/>
            <person name="Masuy D."/>
            <person name="de Haan M."/>
            <person name="Maarse A.C."/>
            <person name="Alcaraz J.-P."/>
            <person name="Cottet A."/>
            <person name="Casacuberta E."/>
            <person name="Monfort A."/>
            <person name="Argiriou A."/>
            <person name="Flores M."/>
            <person name="Liguori R."/>
            <person name="Vitale D."/>
            <person name="Mannhaupt G."/>
            <person name="Haase D."/>
            <person name="Schoof H."/>
            <person name="Rudd S."/>
            <person name="Zaccaria P."/>
            <person name="Mewes H.-W."/>
            <person name="Mayer K.F.X."/>
            <person name="Kaul S."/>
            <person name="Town C.D."/>
            <person name="Koo H.L."/>
            <person name="Tallon L.J."/>
            <person name="Jenkins J."/>
            <person name="Rooney T."/>
            <person name="Rizzo M."/>
            <person name="Walts A."/>
            <person name="Utterback T."/>
            <person name="Fujii C.Y."/>
            <person name="Shea T.P."/>
            <person name="Creasy T.H."/>
            <person name="Haas B."/>
            <person name="Maiti R."/>
            <person name="Wu D."/>
            <person name="Peterson J."/>
            <person name="Van Aken S."/>
            <person name="Pai G."/>
            <person name="Militscher J."/>
            <person name="Sellers P."/>
            <person name="Gill J.E."/>
            <person name="Feldblyum T.V."/>
            <person name="Preuss D."/>
            <person name="Lin X."/>
            <person name="Nierman W.C."/>
            <person name="Salzberg S.L."/>
            <person name="White O."/>
            <person name="Venter J.C."/>
            <person name="Fraser C.M."/>
            <person name="Kaneko T."/>
            <person name="Nakamura Y."/>
            <person name="Sato S."/>
            <person name="Kato T."/>
            <person name="Asamizu E."/>
            <person name="Sasamoto S."/>
            <person name="Kimura T."/>
            <person name="Idesawa K."/>
            <person name="Kawashima K."/>
            <person name="Kishida Y."/>
            <person name="Kiyokawa C."/>
            <person name="Kohara M."/>
            <person name="Matsumoto M."/>
            <person name="Matsuno A."/>
            <person name="Muraki A."/>
            <person name="Nakayama S."/>
            <person name="Nakazaki N."/>
            <person name="Shinpo S."/>
            <person name="Takeuchi C."/>
            <person name="Wada T."/>
            <person name="Watanabe A."/>
            <person name="Yamada M."/>
            <person name="Yasuda M."/>
            <person name="Tabata S."/>
        </authorList>
    </citation>
    <scope>NUCLEOTIDE SEQUENCE [LARGE SCALE GENOMIC DNA]</scope>
    <source>
        <strain>cv. Columbia</strain>
    </source>
</reference>
<reference key="2">
    <citation type="journal article" date="2017" name="Plant J.">
        <title>Araport11: a complete reannotation of the Arabidopsis thaliana reference genome.</title>
        <authorList>
            <person name="Cheng C.Y."/>
            <person name="Krishnakumar V."/>
            <person name="Chan A.P."/>
            <person name="Thibaud-Nissen F."/>
            <person name="Schobel S."/>
            <person name="Town C.D."/>
        </authorList>
    </citation>
    <scope>GENOME REANNOTATION</scope>
    <source>
        <strain>cv. Columbia</strain>
    </source>
</reference>
<reference key="3">
    <citation type="journal article" date="2008" name="Funct. Integr. Genomics">
        <title>Serpins in plants and green algae.</title>
        <authorList>
            <person name="Roberts T.H."/>
            <person name="Hejgaard J."/>
        </authorList>
    </citation>
    <scope>GENE FAMILY</scope>
    <scope>NOMENCLATURE</scope>
</reference>
<dbReference type="EMBL" id="AL138649">
    <property type="protein sequence ID" value="CAB72160.1"/>
    <property type="molecule type" value="Genomic_DNA"/>
</dbReference>
<dbReference type="EMBL" id="CP002686">
    <property type="protein sequence ID" value="AEE78005.1"/>
    <property type="molecule type" value="Genomic_DNA"/>
</dbReference>
<dbReference type="PIR" id="T47462">
    <property type="entry name" value="T47462"/>
</dbReference>
<dbReference type="RefSeq" id="NP_190108.1">
    <property type="nucleotide sequence ID" value="NM_114391.1"/>
</dbReference>
<dbReference type="SMR" id="Q9M1T7"/>
<dbReference type="FunCoup" id="Q9M1T7">
    <property type="interactions" value="53"/>
</dbReference>
<dbReference type="STRING" id="3702.Q9M1T7"/>
<dbReference type="PaxDb" id="3702-AT3G45220.1"/>
<dbReference type="ProteomicsDB" id="226914"/>
<dbReference type="EnsemblPlants" id="AT3G45220.1">
    <property type="protein sequence ID" value="AT3G45220.1"/>
    <property type="gene ID" value="AT3G45220"/>
</dbReference>
<dbReference type="GeneID" id="823658"/>
<dbReference type="Gramene" id="AT3G45220.1">
    <property type="protein sequence ID" value="AT3G45220.1"/>
    <property type="gene ID" value="AT3G45220"/>
</dbReference>
<dbReference type="KEGG" id="ath:AT3G45220"/>
<dbReference type="Araport" id="AT3G45220"/>
<dbReference type="TAIR" id="AT3G45220"/>
<dbReference type="eggNOG" id="KOG2392">
    <property type="taxonomic scope" value="Eukaryota"/>
</dbReference>
<dbReference type="HOGENOM" id="CLU_023330_4_0_1"/>
<dbReference type="InParanoid" id="Q9M1T7"/>
<dbReference type="OMA" id="CYFGKLL"/>
<dbReference type="PhylomeDB" id="Q9M1T7"/>
<dbReference type="PRO" id="PR:Q9M1T7"/>
<dbReference type="Proteomes" id="UP000006548">
    <property type="component" value="Chromosome 3"/>
</dbReference>
<dbReference type="ExpressionAtlas" id="Q9M1T7">
    <property type="expression patterns" value="baseline and differential"/>
</dbReference>
<dbReference type="GO" id="GO:0005615">
    <property type="term" value="C:extracellular space"/>
    <property type="evidence" value="ECO:0007669"/>
    <property type="project" value="InterPro"/>
</dbReference>
<dbReference type="GO" id="GO:0004867">
    <property type="term" value="F:serine-type endopeptidase inhibitor activity"/>
    <property type="evidence" value="ECO:0007669"/>
    <property type="project" value="UniProtKB-KW"/>
</dbReference>
<dbReference type="CDD" id="cd02043">
    <property type="entry name" value="serpinP_plants"/>
    <property type="match status" value="1"/>
</dbReference>
<dbReference type="FunFam" id="3.30.497.10:FF:000012">
    <property type="entry name" value="Predicted protein"/>
    <property type="match status" value="1"/>
</dbReference>
<dbReference type="Gene3D" id="2.30.39.10">
    <property type="entry name" value="Alpha-1-antitrypsin, domain 1"/>
    <property type="match status" value="1"/>
</dbReference>
<dbReference type="Gene3D" id="3.30.497.10">
    <property type="entry name" value="Antithrombin, subunit I, domain 2"/>
    <property type="match status" value="1"/>
</dbReference>
<dbReference type="InterPro" id="IPR023795">
    <property type="entry name" value="Serpin_CS"/>
</dbReference>
<dbReference type="InterPro" id="IPR023796">
    <property type="entry name" value="Serpin_dom"/>
</dbReference>
<dbReference type="InterPro" id="IPR000215">
    <property type="entry name" value="Serpin_fam"/>
</dbReference>
<dbReference type="InterPro" id="IPR036186">
    <property type="entry name" value="Serpin_sf"/>
</dbReference>
<dbReference type="InterPro" id="IPR042178">
    <property type="entry name" value="Serpin_sf_1"/>
</dbReference>
<dbReference type="InterPro" id="IPR042185">
    <property type="entry name" value="Serpin_sf_2"/>
</dbReference>
<dbReference type="PANTHER" id="PTHR11461">
    <property type="entry name" value="SERINE PROTEASE INHIBITOR, SERPIN"/>
    <property type="match status" value="1"/>
</dbReference>
<dbReference type="PANTHER" id="PTHR11461:SF304">
    <property type="entry name" value="SERPIN-Z10-RELATED"/>
    <property type="match status" value="1"/>
</dbReference>
<dbReference type="Pfam" id="PF00079">
    <property type="entry name" value="Serpin"/>
    <property type="match status" value="1"/>
</dbReference>
<dbReference type="SMART" id="SM00093">
    <property type="entry name" value="SERPIN"/>
    <property type="match status" value="1"/>
</dbReference>
<dbReference type="SUPFAM" id="SSF56574">
    <property type="entry name" value="Serpins"/>
    <property type="match status" value="1"/>
</dbReference>
<dbReference type="PROSITE" id="PS00284">
    <property type="entry name" value="SERPIN"/>
    <property type="match status" value="1"/>
</dbReference>
<accession>Q9M1T7</accession>
<name>SPZ4_ARATH</name>
<keyword id="KW-0646">Protease inhibitor</keyword>
<keyword id="KW-1185">Reference proteome</keyword>
<keyword id="KW-0722">Serine protease inhibitor</keyword>
<proteinExistence type="evidence at transcript level"/>
<sequence>MELGKSMENQTDVMVLLAKHVIPTVANGSNLVFSPMSINVLLCLIAAGSNCVTKEQILSFIMLPSSDYLNAVLAKTVSVALNDGMERSDLHLSTAYGVWIDKSLSFKPSFKDLLENSYNATCNQVDFATKPAEVINEVNAWAEVHTNGLIKEILSDDSIKTIRESMLILANAVYFKGAWSKKFDAKLTKSYDFHLLDGTMVKVPFMTNYKKQYLEYYDGFKVLRLPYVEDQRQFAMYIYLPNDRDGLPTLLEEISSKPRFLDNHIPRQRILTEAFKIPKFKFSFEFKASDVLKEMGLTLPFTHGSLTEMVESPSIPENLCVAENLFVSNVFHKACIEVDEEGTEAAAVSVASMTKDMLLMGDFVADHPFLFTVREEKSGVILFMGQVLDPSIH</sequence>
<evidence type="ECO:0000250" key="1"/>
<evidence type="ECO:0000255" key="2"/>
<evidence type="ECO:0000305" key="3"/>
<gene>
    <name type="ordered locus">At3g45220</name>
    <name type="ORF">T14D3.160</name>
</gene>